<name>NADA_THEMA</name>
<proteinExistence type="evidence at protein level"/>
<reference key="1">
    <citation type="journal article" date="1999" name="Nature">
        <title>Evidence for lateral gene transfer between Archaea and Bacteria from genome sequence of Thermotoga maritima.</title>
        <authorList>
            <person name="Nelson K.E."/>
            <person name="Clayton R.A."/>
            <person name="Gill S.R."/>
            <person name="Gwinn M.L."/>
            <person name="Dodson R.J."/>
            <person name="Haft D.H."/>
            <person name="Hickey E.K."/>
            <person name="Peterson J.D."/>
            <person name="Nelson W.C."/>
            <person name="Ketchum K.A."/>
            <person name="McDonald L.A."/>
            <person name="Utterback T.R."/>
            <person name="Malek J.A."/>
            <person name="Linher K.D."/>
            <person name="Garrett M.M."/>
            <person name="Stewart A.M."/>
            <person name="Cotton M.D."/>
            <person name="Pratt M.S."/>
            <person name="Phillips C.A."/>
            <person name="Richardson D.L."/>
            <person name="Heidelberg J.F."/>
            <person name="Sutton G.G."/>
            <person name="Fleischmann R.D."/>
            <person name="Eisen J.A."/>
            <person name="White O."/>
            <person name="Salzberg S.L."/>
            <person name="Smith H.O."/>
            <person name="Venter J.C."/>
            <person name="Fraser C.M."/>
        </authorList>
    </citation>
    <scope>NUCLEOTIDE SEQUENCE [LARGE SCALE GENOMIC DNA]</scope>
    <source>
        <strain>ATCC 43589 / DSM 3109 / JCM 10099 / NBRC 100826 / MSB8</strain>
    </source>
</reference>
<reference evidence="11" key="2">
    <citation type="journal article" date="2014" name="J. Am. Chem. Soc.">
        <title>The crystal structure of FeS quinolinate synthase unravels an enzymatic dehydration mechanism that uses tyrosine and a hydrolase-type triad.</title>
        <authorList>
            <person name="Cherrier M.V."/>
            <person name="Chan A."/>
            <person name="Darnault C."/>
            <person name="Reichmann D."/>
            <person name="Amara P."/>
            <person name="Ollagnier de Choudens S."/>
            <person name="Fontecilla-Camps J.C."/>
        </authorList>
    </citation>
    <scope>X-RAY CRYSTALLOGRAPHY (1.65 ANGSTROMS) OF MUTANT ARG-219 IN COMPLEX WITH IRON-SULFUR (4FE-4S)</scope>
    <scope>FUNCTION</scope>
    <scope>CATALYTIC ACTIVITY</scope>
    <scope>COFACTOR</scope>
    <scope>MUTAGENESIS OF TYR-21 AND LYS-219</scope>
    <source>
        <strain>ATCC 43589 / DSM 3109 / JCM 10099 / NBRC 100826 / MSB8</strain>
    </source>
</reference>
<reference evidence="12 13 14 15 16" key="3">
    <citation type="journal article" date="2016" name="J. Am. Chem. Soc.">
        <title>Crystal structures of quinolinate synthase in complex with a substrate analogue, the condensation intermediate, and substrate-derived product.</title>
        <authorList>
            <person name="Volbeda A."/>
            <person name="Darnault C."/>
            <person name="Renoux O."/>
            <person name="Reichmann D."/>
            <person name="Amara P."/>
            <person name="Ollagnier de Choudens S."/>
            <person name="Fontecilla-Camps J.C."/>
        </authorList>
    </citation>
    <scope>X-RAY CRYSTALLOGRAPHY (1.45 ANGSTROMS) OF MUTANTS PHE-21/ARG-219 AND PHE-107/ARG-219 IN COMPLEXES WITH IRON-SULFUR (4FE-4S); SUBSTRATE ANALOGS; REACTION INTERMEDIATE AND QUINOLINIC ACID</scope>
    <scope>REACTION MECHANISM</scope>
    <scope>COFACTOR</scope>
    <scope>MUTAGENESIS OF TYR-21; TYR-107 AND LYS-219</scope>
</reference>
<reference evidence="17 18 19 20" key="4">
    <citation type="journal article" date="2018" name="ACS Chem. Biol.">
        <title>Crystallographic trapping of reaction intermediates in quinolinic acid synthesis by NadA.</title>
        <authorList>
            <person name="Volbeda A."/>
            <person name="Saez Cabodevilla J."/>
            <person name="Darnault C."/>
            <person name="Gigarel O."/>
            <person name="Han T.H."/>
            <person name="Renoux O."/>
            <person name="Hamelin O."/>
            <person name="Ollagnier-de-Choudens S."/>
            <person name="Amara P."/>
            <person name="Fontecilla-Camps J.C."/>
        </authorList>
    </citation>
    <scope>X-RAY CRYSTALLOGRAPHY (1.50 ANGSTROMS) OF MUTANTS ARG-219 AND PHE-21/ARG-219 IN COMPLEXES WITH IRON-SULFUR (4FE-4S); SUBSTRATE/PRODUCT ANALOGS AND REACTION INTERMEDIATES</scope>
    <scope>REACTION MECHANISM</scope>
    <scope>COFACTOR</scope>
</reference>
<reference evidence="21 22 23" key="5">
    <citation type="journal article" date="2019" name="Chem. Commun. (Camb.)">
        <title>Design of specific inhibitors of quinolinate synthase based on [4Fe-4S] cluster coordination.</title>
        <authorList>
            <person name="Saez Cabodevilla J."/>
            <person name="Volbeda A."/>
            <person name="Hamelin O."/>
            <person name="Latour J.M."/>
            <person name="Gigarel O."/>
            <person name="Clemancey M."/>
            <person name="Darnault C."/>
            <person name="Reichmann D."/>
            <person name="Amara P."/>
            <person name="Fontecilla-Camps J.C."/>
            <person name="Ollagnier de Choudens S."/>
        </authorList>
    </citation>
    <scope>X-RAY CRYSTALLOGRAPHY (1.64 ANGSTROMS) OF MUTANT PHE-21/ARG-219 IN COMPLEXES WITH IRON-SULFUR (4FE-4S) AND INHIBITORS</scope>
    <scope>COFACTOR</scope>
    <scope>ACTIVITY REGULATION</scope>
</reference>
<feature type="chain" id="PRO_0000155798" description="Quinolinate synthase">
    <location>
        <begin position="1"/>
        <end position="298"/>
    </location>
</feature>
<feature type="binding site" evidence="1 8 9 10">
    <location>
        <position position="19"/>
    </location>
    <ligand>
        <name>iminosuccinate</name>
        <dbReference type="ChEBI" id="CHEBI:77875"/>
    </ligand>
</feature>
<feature type="binding site" evidence="1 8 9 10">
    <location>
        <position position="36"/>
    </location>
    <ligand>
        <name>iminosuccinate</name>
        <dbReference type="ChEBI" id="CHEBI:77875"/>
    </ligand>
</feature>
<feature type="binding site" evidence="1 2 3 4 11 12 13 14 15 16">
    <location>
        <position position="81"/>
    </location>
    <ligand>
        <name>[4Fe-4S] cluster</name>
        <dbReference type="ChEBI" id="CHEBI:49883"/>
    </ligand>
</feature>
<feature type="binding site" evidence="1 8 9">
    <location>
        <begin position="107"/>
        <end position="109"/>
    </location>
    <ligand>
        <name>iminosuccinate</name>
        <dbReference type="ChEBI" id="CHEBI:77875"/>
    </ligand>
</feature>
<feature type="binding site" evidence="1 8 9 10">
    <location>
        <position position="124"/>
    </location>
    <ligand>
        <name>iminosuccinate</name>
        <dbReference type="ChEBI" id="CHEBI:77875"/>
    </ligand>
</feature>
<feature type="binding site" evidence="1 2 3 4 11 12 13 14 15 16">
    <location>
        <position position="168"/>
    </location>
    <ligand>
        <name>[4Fe-4S] cluster</name>
        <dbReference type="ChEBI" id="CHEBI:49883"/>
    </ligand>
</feature>
<feature type="binding site" evidence="1 8 9 10">
    <location>
        <begin position="193"/>
        <end position="195"/>
    </location>
    <ligand>
        <name>iminosuccinate</name>
        <dbReference type="ChEBI" id="CHEBI:77875"/>
    </ligand>
</feature>
<feature type="binding site" evidence="1 8 9 10">
    <location>
        <position position="210"/>
    </location>
    <ligand>
        <name>iminosuccinate</name>
        <dbReference type="ChEBI" id="CHEBI:77875"/>
    </ligand>
</feature>
<feature type="binding site" evidence="1 2 3 4 11 12 13 14 15 16">
    <location>
        <position position="254"/>
    </location>
    <ligand>
        <name>[4Fe-4S] cluster</name>
        <dbReference type="ChEBI" id="CHEBI:49883"/>
    </ligand>
</feature>
<feature type="mutagenesis site" description="Retains weak activity; when associated with R-219." evidence="2 3">
    <original>Y</original>
    <variation>F</variation>
    <location>
        <position position="21"/>
    </location>
</feature>
<feature type="mutagenesis site" description="Loss of activity; when associated with R-219." evidence="3">
    <original>Y</original>
    <variation>F</variation>
    <location>
        <position position="107"/>
    </location>
</feature>
<feature type="mutagenesis site" description="No change in activity. Retains weak activity; when associated with F-21. Loss of activity; when associated with F-107." evidence="2 3">
    <original>K</original>
    <variation>R</variation>
    <location>
        <position position="219"/>
    </location>
</feature>
<feature type="helix" evidence="24">
    <location>
        <begin position="1"/>
        <end position="12"/>
    </location>
</feature>
<feature type="strand" evidence="24">
    <location>
        <begin position="14"/>
        <end position="19"/>
    </location>
</feature>
<feature type="helix" evidence="24">
    <location>
        <begin position="24"/>
        <end position="27"/>
    </location>
</feature>
<feature type="strand" evidence="24">
    <location>
        <begin position="31"/>
        <end position="34"/>
    </location>
</feature>
<feature type="helix" evidence="24">
    <location>
        <begin position="36"/>
        <end position="45"/>
    </location>
</feature>
<feature type="strand" evidence="24">
    <location>
        <begin position="49"/>
        <end position="55"/>
    </location>
</feature>
<feature type="helix" evidence="24">
    <location>
        <begin position="57"/>
        <end position="66"/>
    </location>
</feature>
<feature type="strand" evidence="24">
    <location>
        <begin position="70"/>
        <end position="73"/>
    </location>
</feature>
<feature type="helix" evidence="24">
    <location>
        <begin position="82"/>
        <end position="84"/>
    </location>
</feature>
<feature type="helix" evidence="24">
    <location>
        <begin position="89"/>
        <end position="98"/>
    </location>
</feature>
<feature type="strand" evidence="24">
    <location>
        <begin position="104"/>
        <end position="110"/>
    </location>
</feature>
<feature type="helix" evidence="24">
    <location>
        <begin position="112"/>
        <end position="115"/>
    </location>
</feature>
<feature type="strand" evidence="24">
    <location>
        <begin position="119"/>
        <end position="122"/>
    </location>
</feature>
<feature type="turn" evidence="24">
    <location>
        <begin position="124"/>
        <end position="126"/>
    </location>
</feature>
<feature type="helix" evidence="24">
    <location>
        <begin position="127"/>
        <end position="133"/>
    </location>
</feature>
<feature type="strand" evidence="24">
    <location>
        <begin position="137"/>
        <end position="143"/>
    </location>
</feature>
<feature type="helix" evidence="24">
    <location>
        <begin position="145"/>
        <end position="155"/>
    </location>
</feature>
<feature type="strand" evidence="24">
    <location>
        <begin position="158"/>
        <end position="161"/>
    </location>
</feature>
<feature type="helix" evidence="24">
    <location>
        <begin position="169"/>
        <end position="171"/>
    </location>
</feature>
<feature type="helix" evidence="24">
    <location>
        <begin position="176"/>
        <end position="184"/>
    </location>
</feature>
<feature type="strand" evidence="24">
    <location>
        <begin position="189"/>
        <end position="192"/>
    </location>
</feature>
<feature type="helix" evidence="24">
    <location>
        <begin position="198"/>
        <end position="203"/>
    </location>
</feature>
<feature type="strand" evidence="24">
    <location>
        <begin position="204"/>
        <end position="207"/>
    </location>
</feature>
<feature type="helix" evidence="24">
    <location>
        <begin position="210"/>
        <end position="215"/>
    </location>
</feature>
<feature type="helix" evidence="24">
    <location>
        <begin position="216"/>
        <end position="218"/>
    </location>
</feature>
<feature type="strand" evidence="24">
    <location>
        <begin position="223"/>
        <end position="229"/>
    </location>
</feature>
<feature type="helix" evidence="24">
    <location>
        <begin position="232"/>
        <end position="240"/>
    </location>
</feature>
<feature type="strand" evidence="24">
    <location>
        <begin position="244"/>
        <end position="250"/>
    </location>
</feature>
<feature type="helix" evidence="24">
    <location>
        <begin position="257"/>
        <end position="259"/>
    </location>
</feature>
<feature type="helix" evidence="24">
    <location>
        <begin position="262"/>
        <end position="271"/>
    </location>
</feature>
<feature type="helix" evidence="24">
    <location>
        <begin position="280"/>
        <end position="297"/>
    </location>
</feature>
<dbReference type="EC" id="2.5.1.72" evidence="1 2"/>
<dbReference type="EMBL" id="AE000512">
    <property type="protein sequence ID" value="AAD36711.1"/>
    <property type="molecule type" value="Genomic_DNA"/>
</dbReference>
<dbReference type="PIR" id="A72227">
    <property type="entry name" value="A72227"/>
</dbReference>
<dbReference type="RefSeq" id="NP_229444.1">
    <property type="nucleotide sequence ID" value="NC_000853.1"/>
</dbReference>
<dbReference type="RefSeq" id="WP_004082140.1">
    <property type="nucleotide sequence ID" value="NZ_CP011107.1"/>
</dbReference>
<dbReference type="PDB" id="4P3X">
    <property type="method" value="X-ray"/>
    <property type="resolution" value="1.65 A"/>
    <property type="chains" value="A=1-298"/>
</dbReference>
<dbReference type="PDB" id="5F33">
    <property type="method" value="X-ray"/>
    <property type="resolution" value="1.45 A"/>
    <property type="chains" value="A=1-298"/>
</dbReference>
<dbReference type="PDB" id="5F35">
    <property type="method" value="X-ray"/>
    <property type="resolution" value="1.60 A"/>
    <property type="chains" value="A=1-298"/>
</dbReference>
<dbReference type="PDB" id="5F3D">
    <property type="method" value="X-ray"/>
    <property type="resolution" value="1.90 A"/>
    <property type="chains" value="A=1-298"/>
</dbReference>
<dbReference type="PDB" id="5LQM">
    <property type="method" value="X-ray"/>
    <property type="resolution" value="1.62 A"/>
    <property type="chains" value="A=1-298"/>
</dbReference>
<dbReference type="PDB" id="5LQS">
    <property type="method" value="X-ray"/>
    <property type="resolution" value="1.90 A"/>
    <property type="chains" value="A=1-298"/>
</dbReference>
<dbReference type="PDB" id="6F48">
    <property type="method" value="X-ray"/>
    <property type="resolution" value="1.50 A"/>
    <property type="chains" value="A=1-298"/>
</dbReference>
<dbReference type="PDB" id="6F4D">
    <property type="method" value="X-ray"/>
    <property type="resolution" value="2.00 A"/>
    <property type="chains" value="A=1-298"/>
</dbReference>
<dbReference type="PDB" id="6F4L">
    <property type="method" value="X-ray"/>
    <property type="resolution" value="2.30 A"/>
    <property type="chains" value="A=1-298"/>
</dbReference>
<dbReference type="PDB" id="6G74">
    <property type="method" value="X-ray"/>
    <property type="resolution" value="2.00 A"/>
    <property type="chains" value="A/B=1-298"/>
</dbReference>
<dbReference type="PDB" id="6I0K">
    <property type="method" value="X-ray"/>
    <property type="resolution" value="1.64 A"/>
    <property type="chains" value="A=1-298"/>
</dbReference>
<dbReference type="PDB" id="6I0P">
    <property type="method" value="X-ray"/>
    <property type="resolution" value="1.90 A"/>
    <property type="chains" value="A=1-298"/>
</dbReference>
<dbReference type="PDB" id="6I0R">
    <property type="method" value="X-ray"/>
    <property type="resolution" value="2.10 A"/>
    <property type="chains" value="A=1-298"/>
</dbReference>
<dbReference type="PDB" id="7P4M">
    <property type="method" value="X-ray"/>
    <property type="resolution" value="1.55 A"/>
    <property type="chains" value="A=1-298"/>
</dbReference>
<dbReference type="PDB" id="7P4P">
    <property type="method" value="X-ray"/>
    <property type="resolution" value="1.75 A"/>
    <property type="chains" value="A=1-298"/>
</dbReference>
<dbReference type="PDB" id="7P4Q">
    <property type="method" value="X-ray"/>
    <property type="resolution" value="2.20 A"/>
    <property type="chains" value="A=1-298"/>
</dbReference>
<dbReference type="PDBsum" id="4P3X"/>
<dbReference type="PDBsum" id="5F33"/>
<dbReference type="PDBsum" id="5F35"/>
<dbReference type="PDBsum" id="5F3D"/>
<dbReference type="PDBsum" id="5LQM"/>
<dbReference type="PDBsum" id="5LQS"/>
<dbReference type="PDBsum" id="6F48"/>
<dbReference type="PDBsum" id="6F4D"/>
<dbReference type="PDBsum" id="6F4L"/>
<dbReference type="PDBsum" id="6G74"/>
<dbReference type="PDBsum" id="6I0K"/>
<dbReference type="PDBsum" id="6I0P"/>
<dbReference type="PDBsum" id="6I0R"/>
<dbReference type="PDBsum" id="7P4M"/>
<dbReference type="PDBsum" id="7P4P"/>
<dbReference type="PDBsum" id="7P4Q"/>
<dbReference type="SMR" id="Q9X1X7"/>
<dbReference type="FunCoup" id="Q9X1X7">
    <property type="interactions" value="251"/>
</dbReference>
<dbReference type="STRING" id="243274.TM_1644"/>
<dbReference type="PaxDb" id="243274-THEMA_06025"/>
<dbReference type="EnsemblBacteria" id="AAD36711">
    <property type="protein sequence ID" value="AAD36711"/>
    <property type="gene ID" value="TM_1644"/>
</dbReference>
<dbReference type="KEGG" id="tma:TM1644"/>
<dbReference type="KEGG" id="tmi:THEMA_06025"/>
<dbReference type="KEGG" id="tmm:Tmari_1653"/>
<dbReference type="KEGG" id="tmw:THMA_1685"/>
<dbReference type="eggNOG" id="COG0379">
    <property type="taxonomic scope" value="Bacteria"/>
</dbReference>
<dbReference type="InParanoid" id="Q9X1X7"/>
<dbReference type="OrthoDB" id="9801204at2"/>
<dbReference type="BioCyc" id="MetaCyc:MONOMER-21960"/>
<dbReference type="BRENDA" id="2.5.1.72">
    <property type="organism ID" value="6331"/>
</dbReference>
<dbReference type="UniPathway" id="UPA00253">
    <property type="reaction ID" value="UER00327"/>
</dbReference>
<dbReference type="EvolutionaryTrace" id="Q9X1X7"/>
<dbReference type="Proteomes" id="UP000008183">
    <property type="component" value="Chromosome"/>
</dbReference>
<dbReference type="GO" id="GO:0005829">
    <property type="term" value="C:cytosol"/>
    <property type="evidence" value="ECO:0000318"/>
    <property type="project" value="GO_Central"/>
</dbReference>
<dbReference type="GO" id="GO:0051539">
    <property type="term" value="F:4 iron, 4 sulfur cluster binding"/>
    <property type="evidence" value="ECO:0000318"/>
    <property type="project" value="GO_Central"/>
</dbReference>
<dbReference type="GO" id="GO:0046872">
    <property type="term" value="F:metal ion binding"/>
    <property type="evidence" value="ECO:0007669"/>
    <property type="project" value="UniProtKB-KW"/>
</dbReference>
<dbReference type="GO" id="GO:0008987">
    <property type="term" value="F:quinolinate synthetase A activity"/>
    <property type="evidence" value="ECO:0000318"/>
    <property type="project" value="GO_Central"/>
</dbReference>
<dbReference type="GO" id="GO:0034628">
    <property type="term" value="P:'de novo' NAD biosynthetic process from L-aspartate"/>
    <property type="evidence" value="ECO:0000318"/>
    <property type="project" value="GO_Central"/>
</dbReference>
<dbReference type="FunFam" id="3.40.50.10800:FF:000001">
    <property type="entry name" value="Quinolinate synthase A"/>
    <property type="match status" value="1"/>
</dbReference>
<dbReference type="FunFam" id="3.40.50.10800:FF:000003">
    <property type="entry name" value="Quinolinate synthase A"/>
    <property type="match status" value="1"/>
</dbReference>
<dbReference type="Gene3D" id="3.40.50.10800">
    <property type="entry name" value="NadA-like"/>
    <property type="match status" value="3"/>
</dbReference>
<dbReference type="HAMAP" id="MF_00568">
    <property type="entry name" value="NadA_type2"/>
    <property type="match status" value="1"/>
</dbReference>
<dbReference type="InterPro" id="IPR003473">
    <property type="entry name" value="NadA"/>
</dbReference>
<dbReference type="InterPro" id="IPR036094">
    <property type="entry name" value="NadA_sf"/>
</dbReference>
<dbReference type="InterPro" id="IPR023066">
    <property type="entry name" value="Quinolinate_synth_type2"/>
</dbReference>
<dbReference type="NCBIfam" id="TIGR00550">
    <property type="entry name" value="nadA"/>
    <property type="match status" value="1"/>
</dbReference>
<dbReference type="NCBIfam" id="NF006878">
    <property type="entry name" value="PRK09375.1-2"/>
    <property type="match status" value="1"/>
</dbReference>
<dbReference type="PANTHER" id="PTHR30573:SF0">
    <property type="entry name" value="QUINOLINATE SYNTHASE, CHLOROPLASTIC"/>
    <property type="match status" value="1"/>
</dbReference>
<dbReference type="PANTHER" id="PTHR30573">
    <property type="entry name" value="QUINOLINATE SYNTHETASE A"/>
    <property type="match status" value="1"/>
</dbReference>
<dbReference type="Pfam" id="PF02445">
    <property type="entry name" value="NadA"/>
    <property type="match status" value="1"/>
</dbReference>
<dbReference type="SUPFAM" id="SSF142754">
    <property type="entry name" value="NadA-like"/>
    <property type="match status" value="1"/>
</dbReference>
<accession>Q9X1X7</accession>
<gene>
    <name evidence="1 6" type="primary">nadA</name>
    <name type="ordered locus">TM_1644</name>
</gene>
<organism>
    <name type="scientific">Thermotoga maritima (strain ATCC 43589 / DSM 3109 / JCM 10099 / NBRC 100826 / MSB8)</name>
    <dbReference type="NCBI Taxonomy" id="243274"/>
    <lineage>
        <taxon>Bacteria</taxon>
        <taxon>Thermotogati</taxon>
        <taxon>Thermotogota</taxon>
        <taxon>Thermotogae</taxon>
        <taxon>Thermotogales</taxon>
        <taxon>Thermotogaceae</taxon>
        <taxon>Thermotoga</taxon>
    </lineage>
</organism>
<comment type="function">
    <text evidence="1 2">Catalyzes the condensation of iminoaspartate with dihydroxyacetone phosphate to form quinolinate.</text>
</comment>
<comment type="catalytic activity">
    <reaction evidence="1">
        <text>iminosuccinate + dihydroxyacetone phosphate = quinolinate + phosphate + 2 H2O + H(+)</text>
        <dbReference type="Rhea" id="RHEA:25888"/>
        <dbReference type="ChEBI" id="CHEBI:15377"/>
        <dbReference type="ChEBI" id="CHEBI:15378"/>
        <dbReference type="ChEBI" id="CHEBI:29959"/>
        <dbReference type="ChEBI" id="CHEBI:43474"/>
        <dbReference type="ChEBI" id="CHEBI:57642"/>
        <dbReference type="ChEBI" id="CHEBI:77875"/>
        <dbReference type="EC" id="2.5.1.72"/>
    </reaction>
    <physiologicalReaction direction="left-to-right" evidence="1">
        <dbReference type="Rhea" id="RHEA:25889"/>
    </physiologicalReaction>
</comment>
<comment type="cofactor">
    <cofactor evidence="1 2 3 4 5">
        <name>[4Fe-4S] cluster</name>
        <dbReference type="ChEBI" id="CHEBI:49883"/>
    </cofactor>
    <text evidence="1 2 3 4 5">Binds 1 [4Fe-4S] cluster per subunit.</text>
</comment>
<comment type="activity regulation">
    <text evidence="5">Inhibited by 4,5 dithiohydroxyphthalic acid (DTHPA) analogs, which bind to the catalytic iron site of the [4Fe-4S] cluster.</text>
</comment>
<comment type="pathway">
    <text evidence="1 7">Cofactor biosynthesis; NAD(+) biosynthesis; quinolinate from iminoaspartate: step 1/1.</text>
</comment>
<comment type="subcellular location">
    <subcellularLocation>
        <location evidence="1 7">Cytoplasm</location>
    </subcellularLocation>
</comment>
<comment type="similarity">
    <text evidence="1">Belongs to the quinolinate synthase family. Type 2 subfamily.</text>
</comment>
<keyword id="KW-0002">3D-structure</keyword>
<keyword id="KW-0004">4Fe-4S</keyword>
<keyword id="KW-0963">Cytoplasm</keyword>
<keyword id="KW-0408">Iron</keyword>
<keyword id="KW-0411">Iron-sulfur</keyword>
<keyword id="KW-0479">Metal-binding</keyword>
<keyword id="KW-0662">Pyridine nucleotide biosynthesis</keyword>
<keyword id="KW-1185">Reference proteome</keyword>
<keyword id="KW-0808">Transferase</keyword>
<protein>
    <recommendedName>
        <fullName evidence="1 6">Quinolinate synthase</fullName>
        <ecNumber evidence="1 2">2.5.1.72</ecNumber>
    </recommendedName>
</protein>
<evidence type="ECO:0000255" key="1">
    <source>
        <dbReference type="HAMAP-Rule" id="MF_00568"/>
    </source>
</evidence>
<evidence type="ECO:0000269" key="2">
    <source>
    </source>
</evidence>
<evidence type="ECO:0000269" key="3">
    <source>
    </source>
</evidence>
<evidence type="ECO:0000269" key="4">
    <source>
    </source>
</evidence>
<evidence type="ECO:0000269" key="5">
    <source>
    </source>
</evidence>
<evidence type="ECO:0000303" key="6">
    <source>
    </source>
</evidence>
<evidence type="ECO:0000305" key="7"/>
<evidence type="ECO:0000305" key="8">
    <source>
    </source>
</evidence>
<evidence type="ECO:0000305" key="9">
    <source>
    </source>
</evidence>
<evidence type="ECO:0000305" key="10">
    <source>
    </source>
</evidence>
<evidence type="ECO:0007744" key="11">
    <source>
        <dbReference type="PDB" id="4P3X"/>
    </source>
</evidence>
<evidence type="ECO:0007744" key="12">
    <source>
        <dbReference type="PDB" id="5F33"/>
    </source>
</evidence>
<evidence type="ECO:0007744" key="13">
    <source>
        <dbReference type="PDB" id="5F35"/>
    </source>
</evidence>
<evidence type="ECO:0007744" key="14">
    <source>
        <dbReference type="PDB" id="5F3D"/>
    </source>
</evidence>
<evidence type="ECO:0007744" key="15">
    <source>
        <dbReference type="PDB" id="5LQM"/>
    </source>
</evidence>
<evidence type="ECO:0007744" key="16">
    <source>
        <dbReference type="PDB" id="5LQS"/>
    </source>
</evidence>
<evidence type="ECO:0007744" key="17">
    <source>
        <dbReference type="PDB" id="6F48"/>
    </source>
</evidence>
<evidence type="ECO:0007744" key="18">
    <source>
        <dbReference type="PDB" id="6F4D"/>
    </source>
</evidence>
<evidence type="ECO:0007744" key="19">
    <source>
        <dbReference type="PDB" id="6F4L"/>
    </source>
</evidence>
<evidence type="ECO:0007744" key="20">
    <source>
        <dbReference type="PDB" id="6G74"/>
    </source>
</evidence>
<evidence type="ECO:0007744" key="21">
    <source>
        <dbReference type="PDB" id="6I0K"/>
    </source>
</evidence>
<evidence type="ECO:0007744" key="22">
    <source>
        <dbReference type="PDB" id="6I0P"/>
    </source>
</evidence>
<evidence type="ECO:0007744" key="23">
    <source>
        <dbReference type="PDB" id="6I0R"/>
    </source>
</evidence>
<evidence type="ECO:0007829" key="24">
    <source>
        <dbReference type="PDB" id="5F33"/>
    </source>
</evidence>
<sequence length="298" mass="33617">MVDEILKLKKEKGYIILAHNYQIPELQDIADFVGDSLQLARKAMELSEKKILFLGVDFMAELVKILNPDKKVIVPDRSATCPMANRLTPEIIREYREKFPDAPVVLYVNSTSECKTLADVICTSANAVEVVKKLDSSVVIFGPDRNLGEYVAEKTGKKVITIPENGHCPVHQFNAESIDAVRKKYPDAKVIVHPECPKPVRDKADYVGSTGQMEKIPEKDPSRIFVIGTEIGMIHKLKKKFPDREFVPLEMAVCVNMKKNTLENTLHALQTESFEVILPKEVIEKAKKPILRMFELMG</sequence>